<keyword id="KW-0687">Ribonucleoprotein</keyword>
<keyword id="KW-0689">Ribosomal protein</keyword>
<keyword id="KW-0694">RNA-binding</keyword>
<keyword id="KW-0699">rRNA-binding</keyword>
<sequence>MAKDIGLDIPEPTKECDDINCPFHGELPVRGQIHVGTVVSAKMDRTVVIQQRREKLINKYQRYEKRQSKIHAHNPPCIDAKVGDIVTIAECRPLSKTKSYVVVKAEVKA</sequence>
<name>RS17_METBU</name>
<protein>
    <recommendedName>
        <fullName evidence="1">Small ribosomal subunit protein uS17</fullName>
    </recommendedName>
    <alternativeName>
        <fullName evidence="2">30S ribosomal protein S17</fullName>
    </alternativeName>
</protein>
<organism>
    <name type="scientific">Methanococcoides burtonii (strain DSM 6242 / NBRC 107633 / OCM 468 / ACE-M)</name>
    <dbReference type="NCBI Taxonomy" id="259564"/>
    <lineage>
        <taxon>Archaea</taxon>
        <taxon>Methanobacteriati</taxon>
        <taxon>Methanobacteriota</taxon>
        <taxon>Stenosarchaea group</taxon>
        <taxon>Methanomicrobia</taxon>
        <taxon>Methanosarcinales</taxon>
        <taxon>Methanosarcinaceae</taxon>
        <taxon>Methanococcoides</taxon>
    </lineage>
</organism>
<evidence type="ECO:0000255" key="1">
    <source>
        <dbReference type="HAMAP-Rule" id="MF_01345"/>
    </source>
</evidence>
<evidence type="ECO:0000305" key="2"/>
<gene>
    <name evidence="1" type="primary">rps17</name>
    <name type="ordered locus">Mbur_0010</name>
</gene>
<reference key="1">
    <citation type="journal article" date="2009" name="ISME J.">
        <title>The genome sequence of the psychrophilic archaeon, Methanococcoides burtonii: the role of genome evolution in cold adaptation.</title>
        <authorList>
            <person name="Allen M.A."/>
            <person name="Lauro F.M."/>
            <person name="Williams T.J."/>
            <person name="Burg D."/>
            <person name="Siddiqui K.S."/>
            <person name="De Francisci D."/>
            <person name="Chong K.W."/>
            <person name="Pilak O."/>
            <person name="Chew H.H."/>
            <person name="De Maere M.Z."/>
            <person name="Ting L."/>
            <person name="Katrib M."/>
            <person name="Ng C."/>
            <person name="Sowers K.R."/>
            <person name="Galperin M.Y."/>
            <person name="Anderson I.J."/>
            <person name="Ivanova N."/>
            <person name="Dalin E."/>
            <person name="Martinez M."/>
            <person name="Lapidus A."/>
            <person name="Hauser L."/>
            <person name="Land M."/>
            <person name="Thomas T."/>
            <person name="Cavicchioli R."/>
        </authorList>
    </citation>
    <scope>NUCLEOTIDE SEQUENCE [LARGE SCALE GENOMIC DNA]</scope>
    <source>
        <strain>DSM 6242 / NBRC 107633 / OCM 468 / ACE-M</strain>
    </source>
</reference>
<comment type="function">
    <text evidence="1">One of the primary rRNA binding proteins, it binds specifically to the 5'-end of 16S ribosomal RNA.</text>
</comment>
<comment type="subunit">
    <text evidence="1">Part of the 30S ribosomal subunit.</text>
</comment>
<comment type="similarity">
    <text evidence="1">Belongs to the universal ribosomal protein uS17 family.</text>
</comment>
<accession>Q12ZU2</accession>
<dbReference type="EMBL" id="CP000300">
    <property type="protein sequence ID" value="ABE51034.1"/>
    <property type="molecule type" value="Genomic_DNA"/>
</dbReference>
<dbReference type="RefSeq" id="WP_011498198.1">
    <property type="nucleotide sequence ID" value="NC_007955.1"/>
</dbReference>
<dbReference type="SMR" id="Q12ZU2"/>
<dbReference type="STRING" id="259564.Mbur_0010"/>
<dbReference type="GeneID" id="3996910"/>
<dbReference type="KEGG" id="mbu:Mbur_0010"/>
<dbReference type="HOGENOM" id="CLU_073626_0_3_2"/>
<dbReference type="OrthoDB" id="10698at2157"/>
<dbReference type="Proteomes" id="UP000001979">
    <property type="component" value="Chromosome"/>
</dbReference>
<dbReference type="GO" id="GO:0022627">
    <property type="term" value="C:cytosolic small ribosomal subunit"/>
    <property type="evidence" value="ECO:0007669"/>
    <property type="project" value="TreeGrafter"/>
</dbReference>
<dbReference type="GO" id="GO:0019843">
    <property type="term" value="F:rRNA binding"/>
    <property type="evidence" value="ECO:0007669"/>
    <property type="project" value="UniProtKB-UniRule"/>
</dbReference>
<dbReference type="GO" id="GO:0003735">
    <property type="term" value="F:structural constituent of ribosome"/>
    <property type="evidence" value="ECO:0007669"/>
    <property type="project" value="InterPro"/>
</dbReference>
<dbReference type="GO" id="GO:0006412">
    <property type="term" value="P:translation"/>
    <property type="evidence" value="ECO:0007669"/>
    <property type="project" value="UniProtKB-UniRule"/>
</dbReference>
<dbReference type="CDD" id="cd00364">
    <property type="entry name" value="Ribosomal_uS17"/>
    <property type="match status" value="1"/>
</dbReference>
<dbReference type="FunFam" id="2.40.50.1000:FF:000005">
    <property type="entry name" value="30S ribosomal protein S17"/>
    <property type="match status" value="1"/>
</dbReference>
<dbReference type="Gene3D" id="2.40.50.1000">
    <property type="match status" value="1"/>
</dbReference>
<dbReference type="HAMAP" id="MF_01345_A">
    <property type="entry name" value="Ribosomal_uS17_A"/>
    <property type="match status" value="1"/>
</dbReference>
<dbReference type="InterPro" id="IPR012340">
    <property type="entry name" value="NA-bd_OB-fold"/>
</dbReference>
<dbReference type="InterPro" id="IPR000266">
    <property type="entry name" value="Ribosomal_uS17"/>
</dbReference>
<dbReference type="InterPro" id="IPR028333">
    <property type="entry name" value="Ribosomal_uS17_arc/euk"/>
</dbReference>
<dbReference type="InterPro" id="IPR019978">
    <property type="entry name" value="Ribosomal_uS17_archaeal"/>
</dbReference>
<dbReference type="InterPro" id="IPR019979">
    <property type="entry name" value="Ribosomal_uS17_CS"/>
</dbReference>
<dbReference type="NCBIfam" id="NF006345">
    <property type="entry name" value="PRK08572.1"/>
    <property type="match status" value="1"/>
</dbReference>
<dbReference type="NCBIfam" id="TIGR03630">
    <property type="entry name" value="uS17_arch"/>
    <property type="match status" value="1"/>
</dbReference>
<dbReference type="PANTHER" id="PTHR10744">
    <property type="entry name" value="40S RIBOSOMAL PROTEIN S11 FAMILY MEMBER"/>
    <property type="match status" value="1"/>
</dbReference>
<dbReference type="PANTHER" id="PTHR10744:SF9">
    <property type="entry name" value="40S RIBOSOMAL PROTEIN S11-RELATED"/>
    <property type="match status" value="1"/>
</dbReference>
<dbReference type="Pfam" id="PF00366">
    <property type="entry name" value="Ribosomal_S17"/>
    <property type="match status" value="1"/>
</dbReference>
<dbReference type="PRINTS" id="PR00973">
    <property type="entry name" value="RIBOSOMALS17"/>
</dbReference>
<dbReference type="SUPFAM" id="SSF50249">
    <property type="entry name" value="Nucleic acid-binding proteins"/>
    <property type="match status" value="1"/>
</dbReference>
<dbReference type="PROSITE" id="PS00056">
    <property type="entry name" value="RIBOSOMAL_S17"/>
    <property type="match status" value="1"/>
</dbReference>
<feature type="chain" id="PRO_0000255710" description="Small ribosomal subunit protein uS17">
    <location>
        <begin position="1"/>
        <end position="109"/>
    </location>
</feature>
<proteinExistence type="inferred from homology"/>